<evidence type="ECO:0000255" key="1">
    <source>
        <dbReference type="HAMAP-Rule" id="MF_01363"/>
    </source>
</evidence>
<evidence type="ECO:0000305" key="2"/>
<dbReference type="EMBL" id="AL583922">
    <property type="protein sequence ID" value="CAC30417.1"/>
    <property type="molecule type" value="Genomic_DNA"/>
</dbReference>
<dbReference type="PIR" id="D87092">
    <property type="entry name" value="D87092"/>
</dbReference>
<dbReference type="RefSeq" id="NP_302032.1">
    <property type="nucleotide sequence ID" value="NC_002677.1"/>
</dbReference>
<dbReference type="RefSeq" id="WP_010908353.1">
    <property type="nucleotide sequence ID" value="NC_002677.1"/>
</dbReference>
<dbReference type="SMR" id="Q9CBZ2"/>
<dbReference type="STRING" id="272631.gene:17575305"/>
<dbReference type="KEGG" id="mle:ML1467"/>
<dbReference type="PATRIC" id="fig|272631.5.peg.2743"/>
<dbReference type="Leproma" id="ML1467"/>
<dbReference type="eggNOG" id="COG0261">
    <property type="taxonomic scope" value="Bacteria"/>
</dbReference>
<dbReference type="HOGENOM" id="CLU_061463_3_0_11"/>
<dbReference type="OrthoDB" id="9813334at2"/>
<dbReference type="Proteomes" id="UP000000806">
    <property type="component" value="Chromosome"/>
</dbReference>
<dbReference type="GO" id="GO:0005737">
    <property type="term" value="C:cytoplasm"/>
    <property type="evidence" value="ECO:0007669"/>
    <property type="project" value="UniProtKB-ARBA"/>
</dbReference>
<dbReference type="GO" id="GO:1990904">
    <property type="term" value="C:ribonucleoprotein complex"/>
    <property type="evidence" value="ECO:0007669"/>
    <property type="project" value="UniProtKB-KW"/>
</dbReference>
<dbReference type="GO" id="GO:0005840">
    <property type="term" value="C:ribosome"/>
    <property type="evidence" value="ECO:0007669"/>
    <property type="project" value="UniProtKB-KW"/>
</dbReference>
<dbReference type="GO" id="GO:0019843">
    <property type="term" value="F:rRNA binding"/>
    <property type="evidence" value="ECO:0007669"/>
    <property type="project" value="UniProtKB-UniRule"/>
</dbReference>
<dbReference type="GO" id="GO:0003735">
    <property type="term" value="F:structural constituent of ribosome"/>
    <property type="evidence" value="ECO:0007669"/>
    <property type="project" value="InterPro"/>
</dbReference>
<dbReference type="GO" id="GO:0006412">
    <property type="term" value="P:translation"/>
    <property type="evidence" value="ECO:0007669"/>
    <property type="project" value="UniProtKB-UniRule"/>
</dbReference>
<dbReference type="HAMAP" id="MF_01363">
    <property type="entry name" value="Ribosomal_bL21"/>
    <property type="match status" value="1"/>
</dbReference>
<dbReference type="InterPro" id="IPR028909">
    <property type="entry name" value="bL21-like"/>
</dbReference>
<dbReference type="InterPro" id="IPR036164">
    <property type="entry name" value="bL21-like_sf"/>
</dbReference>
<dbReference type="InterPro" id="IPR001787">
    <property type="entry name" value="Ribosomal_bL21"/>
</dbReference>
<dbReference type="InterPro" id="IPR018258">
    <property type="entry name" value="Ribosomal_bL21_CS"/>
</dbReference>
<dbReference type="NCBIfam" id="TIGR00061">
    <property type="entry name" value="L21"/>
    <property type="match status" value="1"/>
</dbReference>
<dbReference type="PANTHER" id="PTHR21349">
    <property type="entry name" value="50S RIBOSOMAL PROTEIN L21"/>
    <property type="match status" value="1"/>
</dbReference>
<dbReference type="PANTHER" id="PTHR21349:SF0">
    <property type="entry name" value="LARGE RIBOSOMAL SUBUNIT PROTEIN BL21M"/>
    <property type="match status" value="1"/>
</dbReference>
<dbReference type="Pfam" id="PF00829">
    <property type="entry name" value="Ribosomal_L21p"/>
    <property type="match status" value="1"/>
</dbReference>
<dbReference type="SUPFAM" id="SSF141091">
    <property type="entry name" value="L21p-like"/>
    <property type="match status" value="1"/>
</dbReference>
<dbReference type="PROSITE" id="PS01169">
    <property type="entry name" value="RIBOSOMAL_L21"/>
    <property type="match status" value="1"/>
</dbReference>
<protein>
    <recommendedName>
        <fullName evidence="1">Large ribosomal subunit protein bL21</fullName>
    </recommendedName>
    <alternativeName>
        <fullName evidence="2">50S ribosomal protein L21</fullName>
    </alternativeName>
</protein>
<feature type="chain" id="PRO_0000181009" description="Large ribosomal subunit protein bL21">
    <location>
        <begin position="1"/>
        <end position="103"/>
    </location>
</feature>
<keyword id="KW-1185">Reference proteome</keyword>
<keyword id="KW-0687">Ribonucleoprotein</keyword>
<keyword id="KW-0689">Ribosomal protein</keyword>
<keyword id="KW-0694">RNA-binding</keyword>
<keyword id="KW-0699">rRNA-binding</keyword>
<gene>
    <name evidence="1" type="primary">rplU</name>
    <name type="ordered locus">ML1467</name>
</gene>
<accession>Q9CBZ2</accession>
<reference key="1">
    <citation type="journal article" date="2001" name="Nature">
        <title>Massive gene decay in the leprosy bacillus.</title>
        <authorList>
            <person name="Cole S.T."/>
            <person name="Eiglmeier K."/>
            <person name="Parkhill J."/>
            <person name="James K.D."/>
            <person name="Thomson N.R."/>
            <person name="Wheeler P.R."/>
            <person name="Honore N."/>
            <person name="Garnier T."/>
            <person name="Churcher C.M."/>
            <person name="Harris D.E."/>
            <person name="Mungall K.L."/>
            <person name="Basham D."/>
            <person name="Brown D."/>
            <person name="Chillingworth T."/>
            <person name="Connor R."/>
            <person name="Davies R.M."/>
            <person name="Devlin K."/>
            <person name="Duthoy S."/>
            <person name="Feltwell T."/>
            <person name="Fraser A."/>
            <person name="Hamlin N."/>
            <person name="Holroyd S."/>
            <person name="Hornsby T."/>
            <person name="Jagels K."/>
            <person name="Lacroix C."/>
            <person name="Maclean J."/>
            <person name="Moule S."/>
            <person name="Murphy L.D."/>
            <person name="Oliver K."/>
            <person name="Quail M.A."/>
            <person name="Rajandream M.A."/>
            <person name="Rutherford K.M."/>
            <person name="Rutter S."/>
            <person name="Seeger K."/>
            <person name="Simon S."/>
            <person name="Simmonds M."/>
            <person name="Skelton J."/>
            <person name="Squares R."/>
            <person name="Squares S."/>
            <person name="Stevens K."/>
            <person name="Taylor K."/>
            <person name="Whitehead S."/>
            <person name="Woodward J.R."/>
            <person name="Barrell B.G."/>
        </authorList>
    </citation>
    <scope>NUCLEOTIDE SEQUENCE [LARGE SCALE GENOMIC DNA]</scope>
    <source>
        <strain>TN</strain>
    </source>
</reference>
<proteinExistence type="inferred from homology"/>
<organism>
    <name type="scientific">Mycobacterium leprae (strain TN)</name>
    <dbReference type="NCBI Taxonomy" id="272631"/>
    <lineage>
        <taxon>Bacteria</taxon>
        <taxon>Bacillati</taxon>
        <taxon>Actinomycetota</taxon>
        <taxon>Actinomycetes</taxon>
        <taxon>Mycobacteriales</taxon>
        <taxon>Mycobacteriaceae</taxon>
        <taxon>Mycobacterium</taxon>
    </lineage>
</organism>
<comment type="function">
    <text evidence="1">This protein binds to 23S rRNA in the presence of protein L20.</text>
</comment>
<comment type="subunit">
    <text evidence="1">Part of the 50S ribosomal subunit. Contacts protein L20.</text>
</comment>
<comment type="similarity">
    <text evidence="1">Belongs to the bacterial ribosomal protein bL21 family.</text>
</comment>
<name>RL21_MYCLE</name>
<sequence>MATYAIVKTGGKQYKVAVGDVVKIEKLDFEPGAKVSLPVTLVVDGATVTTNAKALAKVAVTGKVLEHTKGPKIRIHKFKNKTGYHKRQGHRQQLTVLKVTGIK</sequence>